<proteinExistence type="inferred from homology"/>
<reference key="1">
    <citation type="journal article" date="2003" name="Nucleic Acids Res.">
        <title>The complete genome sequence and analysis of Corynebacterium diphtheriae NCTC13129.</title>
        <authorList>
            <person name="Cerdeno-Tarraga A.-M."/>
            <person name="Efstratiou A."/>
            <person name="Dover L.G."/>
            <person name="Holden M.T.G."/>
            <person name="Pallen M.J."/>
            <person name="Bentley S.D."/>
            <person name="Besra G.S."/>
            <person name="Churcher C.M."/>
            <person name="James K.D."/>
            <person name="De Zoysa A."/>
            <person name="Chillingworth T."/>
            <person name="Cronin A."/>
            <person name="Dowd L."/>
            <person name="Feltwell T."/>
            <person name="Hamlin N."/>
            <person name="Holroyd S."/>
            <person name="Jagels K."/>
            <person name="Moule S."/>
            <person name="Quail M.A."/>
            <person name="Rabbinowitsch E."/>
            <person name="Rutherford K.M."/>
            <person name="Thomson N.R."/>
            <person name="Unwin L."/>
            <person name="Whitehead S."/>
            <person name="Barrell B.G."/>
            <person name="Parkhill J."/>
        </authorList>
    </citation>
    <scope>NUCLEOTIDE SEQUENCE [LARGE SCALE GENOMIC DNA]</scope>
    <source>
        <strain>ATCC 700971 / NCTC 13129 / Biotype gravis</strain>
    </source>
</reference>
<gene>
    <name evidence="1" type="primary">fluC1</name>
    <name evidence="1" type="synonym">crcB1</name>
    <name type="ordered locus">DIP1883</name>
</gene>
<name>FLUC1_CORDI</name>
<organism>
    <name type="scientific">Corynebacterium diphtheriae (strain ATCC 700971 / NCTC 13129 / Biotype gravis)</name>
    <dbReference type="NCBI Taxonomy" id="257309"/>
    <lineage>
        <taxon>Bacteria</taxon>
        <taxon>Bacillati</taxon>
        <taxon>Actinomycetota</taxon>
        <taxon>Actinomycetes</taxon>
        <taxon>Mycobacteriales</taxon>
        <taxon>Corynebacteriaceae</taxon>
        <taxon>Corynebacterium</taxon>
    </lineage>
</organism>
<dbReference type="EMBL" id="BX248359">
    <property type="protein sequence ID" value="CAE50412.1"/>
    <property type="molecule type" value="Genomic_DNA"/>
</dbReference>
<dbReference type="RefSeq" id="WP_010935402.1">
    <property type="nucleotide sequence ID" value="NC_002935.2"/>
</dbReference>
<dbReference type="SMR" id="P61388"/>
<dbReference type="STRING" id="257309.DIP1883"/>
<dbReference type="KEGG" id="cdi:DIP1883"/>
<dbReference type="HOGENOM" id="CLU_114342_1_3_11"/>
<dbReference type="Proteomes" id="UP000002198">
    <property type="component" value="Chromosome"/>
</dbReference>
<dbReference type="GO" id="GO:0005886">
    <property type="term" value="C:plasma membrane"/>
    <property type="evidence" value="ECO:0007669"/>
    <property type="project" value="UniProtKB-SubCell"/>
</dbReference>
<dbReference type="GO" id="GO:0062054">
    <property type="term" value="F:fluoride channel activity"/>
    <property type="evidence" value="ECO:0007669"/>
    <property type="project" value="UniProtKB-UniRule"/>
</dbReference>
<dbReference type="GO" id="GO:0046872">
    <property type="term" value="F:metal ion binding"/>
    <property type="evidence" value="ECO:0007669"/>
    <property type="project" value="UniProtKB-KW"/>
</dbReference>
<dbReference type="GO" id="GO:0140114">
    <property type="term" value="P:cellular detoxification of fluoride"/>
    <property type="evidence" value="ECO:0007669"/>
    <property type="project" value="UniProtKB-UniRule"/>
</dbReference>
<dbReference type="HAMAP" id="MF_00454">
    <property type="entry name" value="FluC"/>
    <property type="match status" value="1"/>
</dbReference>
<dbReference type="InterPro" id="IPR003691">
    <property type="entry name" value="FluC"/>
</dbReference>
<dbReference type="NCBIfam" id="NF001101">
    <property type="entry name" value="PRK00134.1"/>
    <property type="match status" value="1"/>
</dbReference>
<dbReference type="Pfam" id="PF02537">
    <property type="entry name" value="CRCB"/>
    <property type="match status" value="1"/>
</dbReference>
<feature type="chain" id="PRO_0000110089" description="Fluoride-specific ion channel FluC 1">
    <location>
        <begin position="1"/>
        <end position="95"/>
    </location>
</feature>
<feature type="transmembrane region" description="Helical" evidence="1">
    <location>
        <begin position="23"/>
        <end position="43"/>
    </location>
</feature>
<feature type="transmembrane region" description="Helical" evidence="1">
    <location>
        <begin position="49"/>
        <end position="69"/>
    </location>
</feature>
<feature type="transmembrane region" description="Helical" evidence="1">
    <location>
        <begin position="70"/>
        <end position="90"/>
    </location>
</feature>
<feature type="binding site" evidence="1">
    <location>
        <position position="56"/>
    </location>
    <ligand>
        <name>Na(+)</name>
        <dbReference type="ChEBI" id="CHEBI:29101"/>
        <note>structural</note>
    </ligand>
</feature>
<feature type="binding site" evidence="1">
    <location>
        <position position="59"/>
    </location>
    <ligand>
        <name>Na(+)</name>
        <dbReference type="ChEBI" id="CHEBI:29101"/>
        <note>structural</note>
    </ligand>
</feature>
<sequence>MQGVLVGLGAGLGAISRYQLSMLIDAPLALLGINLLGSFLMGWLRPNLLWGTGFLGGFTSFSAFALLMFDGAYLYAAVTVIGCVAAWLLGDRFAA</sequence>
<keyword id="KW-1003">Cell membrane</keyword>
<keyword id="KW-0407">Ion channel</keyword>
<keyword id="KW-0406">Ion transport</keyword>
<keyword id="KW-0472">Membrane</keyword>
<keyword id="KW-0479">Metal-binding</keyword>
<keyword id="KW-1185">Reference proteome</keyword>
<keyword id="KW-0915">Sodium</keyword>
<keyword id="KW-0812">Transmembrane</keyword>
<keyword id="KW-1133">Transmembrane helix</keyword>
<keyword id="KW-0813">Transport</keyword>
<accession>P61388</accession>
<protein>
    <recommendedName>
        <fullName evidence="1">Fluoride-specific ion channel FluC 1</fullName>
    </recommendedName>
</protein>
<evidence type="ECO:0000255" key="1">
    <source>
        <dbReference type="HAMAP-Rule" id="MF_00454"/>
    </source>
</evidence>
<comment type="function">
    <text evidence="1">Fluoride-specific ion channel. Important for reducing fluoride concentration in the cell, thus reducing its toxicity.</text>
</comment>
<comment type="catalytic activity">
    <reaction evidence="1">
        <text>fluoride(in) = fluoride(out)</text>
        <dbReference type="Rhea" id="RHEA:76159"/>
        <dbReference type="ChEBI" id="CHEBI:17051"/>
    </reaction>
    <physiologicalReaction direction="left-to-right" evidence="1">
        <dbReference type="Rhea" id="RHEA:76160"/>
    </physiologicalReaction>
</comment>
<comment type="activity regulation">
    <text evidence="1">Na(+) is not transported, but it plays an essential structural role and its presence is essential for fluoride channel function.</text>
</comment>
<comment type="subcellular location">
    <subcellularLocation>
        <location evidence="1">Cell membrane</location>
        <topology evidence="1">Multi-pass membrane protein</topology>
    </subcellularLocation>
</comment>
<comment type="similarity">
    <text evidence="1">Belongs to the fluoride channel Fluc/FEX (TC 1.A.43) family.</text>
</comment>